<geneLocation type="non-photosynthetic plastid"/>
<accession>P34776</accession>
<organism>
    <name type="scientific">Euglena longa</name>
    <name type="common">Euglenophycean alga</name>
    <name type="synonym">Astasia longa</name>
    <dbReference type="NCBI Taxonomy" id="3037"/>
    <lineage>
        <taxon>Eukaryota</taxon>
        <taxon>Discoba</taxon>
        <taxon>Euglenozoa</taxon>
        <taxon>Euglenida</taxon>
        <taxon>Spirocuta</taxon>
        <taxon>Euglenophyceae</taxon>
        <taxon>Euglenales</taxon>
        <taxon>Euglenaceae</taxon>
        <taxon>Euglena</taxon>
    </lineage>
</organism>
<comment type="subcellular location">
    <subcellularLocation>
        <location>Plastid</location>
    </subcellularLocation>
</comment>
<comment type="similarity">
    <text evidence="1">Belongs to the A.longa ORF167/ORF288 family.</text>
</comment>
<feature type="chain" id="PRO_0000217418" description="Uncharacterized 34.5 kDa protein in rps12-trnP intergenic region">
    <location>
        <begin position="1"/>
        <end position="287"/>
    </location>
</feature>
<dbReference type="EMBL" id="X82630">
    <property type="protein sequence ID" value="CAA57952.1"/>
    <property type="molecule type" value="Genomic_DNA"/>
</dbReference>
<dbReference type="EMBL" id="AJ294725">
    <property type="protein sequence ID" value="CAC24586.1"/>
    <property type="molecule type" value="Genomic_DNA"/>
</dbReference>
<dbReference type="PIR" id="S49605">
    <property type="entry name" value="S49605"/>
</dbReference>
<dbReference type="RefSeq" id="NP_074975.1">
    <property type="nucleotide sequence ID" value="NC_002652.1"/>
</dbReference>
<dbReference type="GeneID" id="1457308"/>
<dbReference type="GO" id="GO:0009536">
    <property type="term" value="C:plastid"/>
    <property type="evidence" value="ECO:0007669"/>
    <property type="project" value="UniProtKB-SubCell"/>
</dbReference>
<dbReference type="InterPro" id="IPR006851">
    <property type="entry name" value="DUF613"/>
</dbReference>
<dbReference type="Pfam" id="PF04764">
    <property type="entry name" value="DUF613"/>
    <property type="match status" value="2"/>
</dbReference>
<proteinExistence type="inferred from homology"/>
<evidence type="ECO:0000305" key="1"/>
<keyword id="KW-0934">Plastid</keyword>
<reference key="1">
    <citation type="submission" date="1994-11" db="EMBL/GenBank/DDBJ databases">
        <title>The ribosomal protein gene rps12 from the plastid genome of the nonphotosynthetic flagellate Astasia longa.</title>
        <authorList>
            <person name="Knauf U."/>
            <person name="Hachtel W."/>
        </authorList>
    </citation>
    <scope>NUCLEOTIDE SEQUENCE [GENOMIC DNA]</scope>
    <source>
        <strain>CCAP 1204-17a</strain>
    </source>
</reference>
<reference key="2">
    <citation type="journal article" date="2000" name="Protist">
        <title>Complete gene map of the plastid genome of the nonphotosynthetic euglenoid flagellate Astasia longa.</title>
        <authorList>
            <person name="Gockel G."/>
            <person name="Hachtel W."/>
        </authorList>
    </citation>
    <scope>NUCLEOTIDE SEQUENCE [LARGE SCALE GENOMIC DNA]</scope>
    <source>
        <strain>CCAP 1204-17a</strain>
    </source>
</reference>
<reference key="3">
    <citation type="journal article" date="1994" name="Curr. Genet.">
        <title>Genes for components of the chloroplast translational apparatus are conserved in the reduced 73-kb plastid DNA of the nonphotosynthetic euglenoid flagellate Astasia longa.</title>
        <authorList>
            <person name="Gockel G."/>
            <person name="Hachtel W."/>
            <person name="Baier S."/>
            <person name="Fliss C."/>
            <person name="Henke M."/>
        </authorList>
    </citation>
    <scope>NUCLEOTIDE SEQUENCE [GENOMIC DNA] OF 152-287</scope>
    <source>
        <strain>CCAP 1204-17a</strain>
    </source>
</reference>
<protein>
    <recommendedName>
        <fullName>Uncharacterized 34.5 kDa protein in rps12-trnP intergenic region</fullName>
    </recommendedName>
    <alternativeName>
        <fullName>ORF288</fullName>
    </alternativeName>
</protein>
<name>YCY2_EUGLO</name>
<sequence>MFFICFNKKSNVVGLQISKCSGEFCIYREPKDKTYWNNFYYMSFYVNNKKVGVNCNITDIEYSLLDIFLHGPFQVNLSEYLNVCDCVNKRFLKYERMLKEKVVNGININFSLCENKNSLVFLDNYNLQEYLGPNNVLYVFVNSVLMDKKYFSREIRNKDFWNEWRCTKMPLYVNSKRVGKFYYYSEYVLHSLPGEEPNVLEYFVLDLFLFGPVEIEVSEYEKRTKQREYNTSLYLYLYKMDLISGVNIIFDEKTTDYSKILQTQFQTYHNLDDDRILNVCVITRMRL</sequence>